<feature type="chain" id="PRO_1000189538" description="Cytoskeleton protein RodZ">
    <location>
        <begin position="1"/>
        <end position="337"/>
    </location>
</feature>
<feature type="topological domain" description="Cytoplasmic" evidence="1">
    <location>
        <begin position="1"/>
        <end position="111"/>
    </location>
</feature>
<feature type="transmembrane region" description="Helical; Signal-anchor for type II membrane protein" evidence="1">
    <location>
        <begin position="112"/>
        <end position="132"/>
    </location>
</feature>
<feature type="topological domain" description="Periplasmic" evidence="1">
    <location>
        <begin position="133"/>
        <end position="337"/>
    </location>
</feature>
<feature type="domain" description="HTH cro/C1-type" evidence="1">
    <location>
        <begin position="19"/>
        <end position="71"/>
    </location>
</feature>
<feature type="DNA-binding region" description="H-T-H motif" evidence="1">
    <location>
        <begin position="30"/>
        <end position="49"/>
    </location>
</feature>
<feature type="region of interest" description="Disordered" evidence="2">
    <location>
        <begin position="145"/>
        <end position="237"/>
    </location>
</feature>
<feature type="compositionally biased region" description="Polar residues" evidence="2">
    <location>
        <begin position="145"/>
        <end position="167"/>
    </location>
</feature>
<feature type="compositionally biased region" description="Low complexity" evidence="2">
    <location>
        <begin position="168"/>
        <end position="207"/>
    </location>
</feature>
<feature type="compositionally biased region" description="Polar residues" evidence="2">
    <location>
        <begin position="208"/>
        <end position="218"/>
    </location>
</feature>
<feature type="compositionally biased region" description="Low complexity" evidence="2">
    <location>
        <begin position="219"/>
        <end position="237"/>
    </location>
</feature>
<comment type="function">
    <text evidence="1">Cytoskeletal protein that is involved in cell-shape control through regulation of the length of the long axis.</text>
</comment>
<comment type="subcellular location">
    <subcellularLocation>
        <location evidence="1">Cell inner membrane</location>
        <topology evidence="1">Single-pass type II membrane protein</topology>
    </subcellularLocation>
    <text evidence="1">Forms helical filaments along the long axis of the cell.</text>
</comment>
<comment type="domain">
    <text evidence="1">The helix-turn-helix (HTH) motif in the cytoplasmic domain of the N-terminus is involved in the formation of spirals to maintain the rigid rod shape. As this protein is anchored in the cytoplasmic membrane, the HTH motif may contribute to protein-protein interactions to form the RodZ helix, which is localized beneath the cytoplasmic membrane. The C-terminal domain may be critical for determination of the rod shape by probably interacting with enzymes required for synthesis of the peptidoglycan layer, including PBPs in the periplasm.</text>
</comment>
<comment type="similarity">
    <text evidence="1">Belongs to the RodZ family.</text>
</comment>
<keyword id="KW-0997">Cell inner membrane</keyword>
<keyword id="KW-1003">Cell membrane</keyword>
<keyword id="KW-0133">Cell shape</keyword>
<keyword id="KW-0238">DNA-binding</keyword>
<keyword id="KW-0472">Membrane</keyword>
<keyword id="KW-1185">Reference proteome</keyword>
<keyword id="KW-0735">Signal-anchor</keyword>
<keyword id="KW-0812">Transmembrane</keyword>
<keyword id="KW-1133">Transmembrane helix</keyword>
<protein>
    <recommendedName>
        <fullName evidence="1">Cytoskeleton protein RodZ</fullName>
    </recommendedName>
</protein>
<gene>
    <name evidence="1" type="primary">rodZ</name>
    <name type="ordered locus">EC55989_2801</name>
</gene>
<organism>
    <name type="scientific">Escherichia coli (strain 55989 / EAEC)</name>
    <dbReference type="NCBI Taxonomy" id="585055"/>
    <lineage>
        <taxon>Bacteria</taxon>
        <taxon>Pseudomonadati</taxon>
        <taxon>Pseudomonadota</taxon>
        <taxon>Gammaproteobacteria</taxon>
        <taxon>Enterobacterales</taxon>
        <taxon>Enterobacteriaceae</taxon>
        <taxon>Escherichia</taxon>
    </lineage>
</organism>
<accession>B7LDA8</accession>
<name>RODZ_ECO55</name>
<dbReference type="EMBL" id="CU928145">
    <property type="protein sequence ID" value="CAU98674.1"/>
    <property type="molecule type" value="Genomic_DNA"/>
</dbReference>
<dbReference type="RefSeq" id="WP_001090850.1">
    <property type="nucleotide sequence ID" value="NC_011748.1"/>
</dbReference>
<dbReference type="SMR" id="B7LDA8"/>
<dbReference type="KEGG" id="eck:EC55989_2801"/>
<dbReference type="HOGENOM" id="CLU_047530_3_1_6"/>
<dbReference type="Proteomes" id="UP000000746">
    <property type="component" value="Chromosome"/>
</dbReference>
<dbReference type="GO" id="GO:0005886">
    <property type="term" value="C:plasma membrane"/>
    <property type="evidence" value="ECO:0007669"/>
    <property type="project" value="UniProtKB-SubCell"/>
</dbReference>
<dbReference type="GO" id="GO:0003677">
    <property type="term" value="F:DNA binding"/>
    <property type="evidence" value="ECO:0007669"/>
    <property type="project" value="UniProtKB-KW"/>
</dbReference>
<dbReference type="GO" id="GO:0008360">
    <property type="term" value="P:regulation of cell shape"/>
    <property type="evidence" value="ECO:0007669"/>
    <property type="project" value="UniProtKB-UniRule"/>
</dbReference>
<dbReference type="CDD" id="cd00093">
    <property type="entry name" value="HTH_XRE"/>
    <property type="match status" value="1"/>
</dbReference>
<dbReference type="FunFam" id="1.10.260.40:FF:000014">
    <property type="entry name" value="Cytoskeleton protein RodZ"/>
    <property type="match status" value="1"/>
</dbReference>
<dbReference type="Gene3D" id="1.10.260.40">
    <property type="entry name" value="lambda repressor-like DNA-binding domains"/>
    <property type="match status" value="1"/>
</dbReference>
<dbReference type="HAMAP" id="MF_02017">
    <property type="entry name" value="RodZ"/>
    <property type="match status" value="1"/>
</dbReference>
<dbReference type="InterPro" id="IPR050400">
    <property type="entry name" value="Bact_Cytoskel_RodZ"/>
</dbReference>
<dbReference type="InterPro" id="IPR001387">
    <property type="entry name" value="Cro/C1-type_HTH"/>
</dbReference>
<dbReference type="InterPro" id="IPR010982">
    <property type="entry name" value="Lambda_DNA-bd_dom_sf"/>
</dbReference>
<dbReference type="InterPro" id="IPR023690">
    <property type="entry name" value="RodZ"/>
</dbReference>
<dbReference type="InterPro" id="IPR025194">
    <property type="entry name" value="RodZ-like_C"/>
</dbReference>
<dbReference type="NCBIfam" id="NF008109">
    <property type="entry name" value="PRK10856.1"/>
    <property type="match status" value="1"/>
</dbReference>
<dbReference type="PANTHER" id="PTHR34475">
    <property type="match status" value="1"/>
</dbReference>
<dbReference type="PANTHER" id="PTHR34475:SF1">
    <property type="entry name" value="CYTOSKELETON PROTEIN RODZ"/>
    <property type="match status" value="1"/>
</dbReference>
<dbReference type="Pfam" id="PF13413">
    <property type="entry name" value="HTH_25"/>
    <property type="match status" value="1"/>
</dbReference>
<dbReference type="Pfam" id="PF13464">
    <property type="entry name" value="RodZ_C"/>
    <property type="match status" value="1"/>
</dbReference>
<dbReference type="SMART" id="SM00530">
    <property type="entry name" value="HTH_XRE"/>
    <property type="match status" value="1"/>
</dbReference>
<dbReference type="SUPFAM" id="SSF47413">
    <property type="entry name" value="lambda repressor-like DNA-binding domains"/>
    <property type="match status" value="1"/>
</dbReference>
<dbReference type="PROSITE" id="PS50943">
    <property type="entry name" value="HTH_CROC1"/>
    <property type="match status" value="1"/>
</dbReference>
<proteinExistence type="inferred from homology"/>
<reference key="1">
    <citation type="journal article" date="2009" name="PLoS Genet.">
        <title>Organised genome dynamics in the Escherichia coli species results in highly diverse adaptive paths.</title>
        <authorList>
            <person name="Touchon M."/>
            <person name="Hoede C."/>
            <person name="Tenaillon O."/>
            <person name="Barbe V."/>
            <person name="Baeriswyl S."/>
            <person name="Bidet P."/>
            <person name="Bingen E."/>
            <person name="Bonacorsi S."/>
            <person name="Bouchier C."/>
            <person name="Bouvet O."/>
            <person name="Calteau A."/>
            <person name="Chiapello H."/>
            <person name="Clermont O."/>
            <person name="Cruveiller S."/>
            <person name="Danchin A."/>
            <person name="Diard M."/>
            <person name="Dossat C."/>
            <person name="Karoui M.E."/>
            <person name="Frapy E."/>
            <person name="Garry L."/>
            <person name="Ghigo J.M."/>
            <person name="Gilles A.M."/>
            <person name="Johnson J."/>
            <person name="Le Bouguenec C."/>
            <person name="Lescat M."/>
            <person name="Mangenot S."/>
            <person name="Martinez-Jehanne V."/>
            <person name="Matic I."/>
            <person name="Nassif X."/>
            <person name="Oztas S."/>
            <person name="Petit M.A."/>
            <person name="Pichon C."/>
            <person name="Rouy Z."/>
            <person name="Ruf C.S."/>
            <person name="Schneider D."/>
            <person name="Tourret J."/>
            <person name="Vacherie B."/>
            <person name="Vallenet D."/>
            <person name="Medigue C."/>
            <person name="Rocha E.P.C."/>
            <person name="Denamur E."/>
        </authorList>
    </citation>
    <scope>NUCLEOTIDE SEQUENCE [LARGE SCALE GENOMIC DNA]</scope>
    <source>
        <strain>55989 / EAEC</strain>
    </source>
</reference>
<sequence length="337" mass="36175">MNTEATHDQNEALTTGARLRNAREQLGLSQQAVAERLCLKVSTVRDIEEDKAPADLASTFLRGYIRSYARLVHIPEEELLPGLEKQAPLRAAKVAPMQSFSLGKRRKKRDGWLMTFTWLVLFVVIGLSGAWWWQDHKAQQEEITTMADQSSAELSSNSEQGQSVPLNTSTTTDPATTSTPPASVDTTATNTQTPAVTAPAPAVDPQQNAVVSPSQANVDTAATPAPTATTTPDGAAPLPTDQAGVTTPAADPNALVMNFTADCWLEVTDATGKKLFSGMQRKDGNLNLTGQAPYKLKIGAPAAVQIQYQGKPVDLSRFIRTNQVARLTLNAEQSPAQ</sequence>
<evidence type="ECO:0000255" key="1">
    <source>
        <dbReference type="HAMAP-Rule" id="MF_02017"/>
    </source>
</evidence>
<evidence type="ECO:0000256" key="2">
    <source>
        <dbReference type="SAM" id="MobiDB-lite"/>
    </source>
</evidence>